<gene>
    <name evidence="1" type="primary">ureE</name>
    <name type="ordered locus">Npun_R6143</name>
</gene>
<organism>
    <name type="scientific">Nostoc punctiforme (strain ATCC 29133 / PCC 73102)</name>
    <dbReference type="NCBI Taxonomy" id="63737"/>
    <lineage>
        <taxon>Bacteria</taxon>
        <taxon>Bacillati</taxon>
        <taxon>Cyanobacteriota</taxon>
        <taxon>Cyanophyceae</taxon>
        <taxon>Nostocales</taxon>
        <taxon>Nostocaceae</taxon>
        <taxon>Nostoc</taxon>
    </lineage>
</organism>
<keyword id="KW-0143">Chaperone</keyword>
<keyword id="KW-0963">Cytoplasm</keyword>
<keyword id="KW-0533">Nickel</keyword>
<keyword id="KW-1185">Reference proteome</keyword>
<dbReference type="EMBL" id="CP001037">
    <property type="protein sequence ID" value="ACC84429.1"/>
    <property type="molecule type" value="Genomic_DNA"/>
</dbReference>
<dbReference type="RefSeq" id="WP_012412369.1">
    <property type="nucleotide sequence ID" value="NC_010628.1"/>
</dbReference>
<dbReference type="SMR" id="B2IVW8"/>
<dbReference type="STRING" id="63737.Npun_R6143"/>
<dbReference type="EnsemblBacteria" id="ACC84429">
    <property type="protein sequence ID" value="ACC84429"/>
    <property type="gene ID" value="Npun_R6143"/>
</dbReference>
<dbReference type="KEGG" id="npu:Npun_R6143"/>
<dbReference type="eggNOG" id="COG2371">
    <property type="taxonomic scope" value="Bacteria"/>
</dbReference>
<dbReference type="HOGENOM" id="CLU_093757_2_0_3"/>
<dbReference type="OrthoDB" id="5421304at2"/>
<dbReference type="PhylomeDB" id="B2IVW8"/>
<dbReference type="Proteomes" id="UP000001191">
    <property type="component" value="Chromosome"/>
</dbReference>
<dbReference type="GO" id="GO:0005737">
    <property type="term" value="C:cytoplasm"/>
    <property type="evidence" value="ECO:0007669"/>
    <property type="project" value="UniProtKB-SubCell"/>
</dbReference>
<dbReference type="GO" id="GO:0016151">
    <property type="term" value="F:nickel cation binding"/>
    <property type="evidence" value="ECO:0007669"/>
    <property type="project" value="UniProtKB-UniRule"/>
</dbReference>
<dbReference type="GO" id="GO:0051082">
    <property type="term" value="F:unfolded protein binding"/>
    <property type="evidence" value="ECO:0007669"/>
    <property type="project" value="UniProtKB-UniRule"/>
</dbReference>
<dbReference type="GO" id="GO:0006457">
    <property type="term" value="P:protein folding"/>
    <property type="evidence" value="ECO:0007669"/>
    <property type="project" value="InterPro"/>
</dbReference>
<dbReference type="GO" id="GO:0065003">
    <property type="term" value="P:protein-containing complex assembly"/>
    <property type="evidence" value="ECO:0007669"/>
    <property type="project" value="InterPro"/>
</dbReference>
<dbReference type="GO" id="GO:0019627">
    <property type="term" value="P:urea metabolic process"/>
    <property type="evidence" value="ECO:0007669"/>
    <property type="project" value="InterPro"/>
</dbReference>
<dbReference type="CDD" id="cd00571">
    <property type="entry name" value="UreE"/>
    <property type="match status" value="1"/>
</dbReference>
<dbReference type="Gene3D" id="2.60.260.20">
    <property type="entry name" value="Urease metallochaperone UreE, N-terminal domain"/>
    <property type="match status" value="1"/>
</dbReference>
<dbReference type="Gene3D" id="3.30.70.790">
    <property type="entry name" value="UreE, C-terminal domain"/>
    <property type="match status" value="1"/>
</dbReference>
<dbReference type="HAMAP" id="MF_00822">
    <property type="entry name" value="UreE"/>
    <property type="match status" value="1"/>
</dbReference>
<dbReference type="InterPro" id="IPR012406">
    <property type="entry name" value="UreE"/>
</dbReference>
<dbReference type="InterPro" id="IPR007864">
    <property type="entry name" value="UreE_C_dom"/>
</dbReference>
<dbReference type="InterPro" id="IPR004029">
    <property type="entry name" value="UreE_N"/>
</dbReference>
<dbReference type="InterPro" id="IPR036118">
    <property type="entry name" value="UreE_N_sf"/>
</dbReference>
<dbReference type="NCBIfam" id="NF009751">
    <property type="entry name" value="PRK13261.1-1"/>
    <property type="match status" value="1"/>
</dbReference>
<dbReference type="Pfam" id="PF05194">
    <property type="entry name" value="UreE_C"/>
    <property type="match status" value="1"/>
</dbReference>
<dbReference type="Pfam" id="PF02814">
    <property type="entry name" value="UreE_N"/>
    <property type="match status" value="1"/>
</dbReference>
<dbReference type="PIRSF" id="PIRSF036402">
    <property type="entry name" value="Ureas_acces_UreE"/>
    <property type="match status" value="1"/>
</dbReference>
<dbReference type="SMART" id="SM00988">
    <property type="entry name" value="UreE_N"/>
    <property type="match status" value="1"/>
</dbReference>
<dbReference type="SUPFAM" id="SSF69737">
    <property type="entry name" value="Urease metallochaperone UreE, C-terminal domain"/>
    <property type="match status" value="1"/>
</dbReference>
<dbReference type="SUPFAM" id="SSF69287">
    <property type="entry name" value="Urease metallochaperone UreE, N-terminal domain"/>
    <property type="match status" value="1"/>
</dbReference>
<protein>
    <recommendedName>
        <fullName evidence="1">Urease accessory protein UreE</fullName>
    </recommendedName>
</protein>
<proteinExistence type="inferred from homology"/>
<feature type="chain" id="PRO_1000148716" description="Urease accessory protein UreE">
    <location>
        <begin position="1"/>
        <end position="148"/>
    </location>
</feature>
<sequence length="148" mass="16719">MLTFTQLKPPNGDATVTFTLALTAEERTRSRHRFETEDGKVVFLHLPRGTVLHDGDILLEETHNSLIRIIAKPELVVTAFAQTPLLLLRAAYHLGNRHVPVEITPTYLRFSSDSVLRAMLEQLGLEVKEEILPFQPELGAYGQHHHAH</sequence>
<comment type="function">
    <text evidence="1">Involved in urease metallocenter assembly. Binds nickel. Probably functions as a nickel donor during metallocenter assembly.</text>
</comment>
<comment type="subcellular location">
    <subcellularLocation>
        <location evidence="1">Cytoplasm</location>
    </subcellularLocation>
</comment>
<comment type="similarity">
    <text evidence="1">Belongs to the UreE family.</text>
</comment>
<reference key="1">
    <citation type="journal article" date="2013" name="Plant Physiol.">
        <title>A Nostoc punctiforme Sugar Transporter Necessary to Establish a Cyanobacterium-Plant Symbiosis.</title>
        <authorList>
            <person name="Ekman M."/>
            <person name="Picossi S."/>
            <person name="Campbell E.L."/>
            <person name="Meeks J.C."/>
            <person name="Flores E."/>
        </authorList>
    </citation>
    <scope>NUCLEOTIDE SEQUENCE [LARGE SCALE GENOMIC DNA]</scope>
    <source>
        <strain>ATCC 29133 / PCC 73102</strain>
    </source>
</reference>
<evidence type="ECO:0000255" key="1">
    <source>
        <dbReference type="HAMAP-Rule" id="MF_00822"/>
    </source>
</evidence>
<name>UREE_NOSP7</name>
<accession>B2IVW8</accession>